<keyword id="KW-0030">Aminoacyl-tRNA synthetase</keyword>
<keyword id="KW-0067">ATP-binding</keyword>
<keyword id="KW-0963">Cytoplasm</keyword>
<keyword id="KW-0436">Ligase</keyword>
<keyword id="KW-0547">Nucleotide-binding</keyword>
<keyword id="KW-0648">Protein biosynthesis</keyword>
<keyword id="KW-1185">Reference proteome</keyword>
<reference key="1">
    <citation type="submission" date="2009-01" db="EMBL/GenBank/DDBJ databases">
        <title>Complete sequence of chromosome of Methylobacterium nodulans ORS 2060.</title>
        <authorList>
            <consortium name="US DOE Joint Genome Institute"/>
            <person name="Lucas S."/>
            <person name="Copeland A."/>
            <person name="Lapidus A."/>
            <person name="Glavina del Rio T."/>
            <person name="Dalin E."/>
            <person name="Tice H."/>
            <person name="Bruce D."/>
            <person name="Goodwin L."/>
            <person name="Pitluck S."/>
            <person name="Sims D."/>
            <person name="Brettin T."/>
            <person name="Detter J.C."/>
            <person name="Han C."/>
            <person name="Larimer F."/>
            <person name="Land M."/>
            <person name="Hauser L."/>
            <person name="Kyrpides N."/>
            <person name="Ivanova N."/>
            <person name="Marx C.J."/>
            <person name="Richardson P."/>
        </authorList>
    </citation>
    <scope>NUCLEOTIDE SEQUENCE [LARGE SCALE GENOMIC DNA]</scope>
    <source>
        <strain>LMG 21967 / CNCM I-2342 / ORS 2060</strain>
    </source>
</reference>
<comment type="function">
    <text evidence="1">Aspartyl-tRNA synthetase with relaxed tRNA specificity since it is able to aspartylate not only its cognate tRNA(Asp) but also tRNA(Asn). Reaction proceeds in two steps: L-aspartate is first activated by ATP to form Asp-AMP and then transferred to the acceptor end of tRNA(Asp/Asn).</text>
</comment>
<comment type="catalytic activity">
    <reaction evidence="1">
        <text>tRNA(Asx) + L-aspartate + ATP = L-aspartyl-tRNA(Asx) + AMP + diphosphate</text>
        <dbReference type="Rhea" id="RHEA:18349"/>
        <dbReference type="Rhea" id="RHEA-COMP:9710"/>
        <dbReference type="Rhea" id="RHEA-COMP:9711"/>
        <dbReference type="ChEBI" id="CHEBI:29991"/>
        <dbReference type="ChEBI" id="CHEBI:30616"/>
        <dbReference type="ChEBI" id="CHEBI:33019"/>
        <dbReference type="ChEBI" id="CHEBI:78442"/>
        <dbReference type="ChEBI" id="CHEBI:78516"/>
        <dbReference type="ChEBI" id="CHEBI:456215"/>
        <dbReference type="EC" id="6.1.1.23"/>
    </reaction>
</comment>
<comment type="subunit">
    <text evidence="1">Homodimer.</text>
</comment>
<comment type="subcellular location">
    <subcellularLocation>
        <location evidence="1">Cytoplasm</location>
    </subcellularLocation>
</comment>
<comment type="similarity">
    <text evidence="1">Belongs to the class-II aminoacyl-tRNA synthetase family. Type 1 subfamily.</text>
</comment>
<accession>B8IUT2</accession>
<gene>
    <name evidence="1" type="primary">aspS</name>
    <name type="ordered locus">Mnod_2168</name>
</gene>
<name>SYDND_METNO</name>
<proteinExistence type="inferred from homology"/>
<protein>
    <recommendedName>
        <fullName evidence="1">Aspartate--tRNA(Asp/Asn) ligase</fullName>
        <ecNumber evidence="1">6.1.1.23</ecNumber>
    </recommendedName>
    <alternativeName>
        <fullName evidence="1">Aspartyl-tRNA synthetase</fullName>
        <shortName evidence="1">AspRS</shortName>
    </alternativeName>
    <alternativeName>
        <fullName evidence="1">Non-discriminating aspartyl-tRNA synthetase</fullName>
        <shortName evidence="1">ND-AspRS</shortName>
    </alternativeName>
</protein>
<dbReference type="EC" id="6.1.1.23" evidence="1"/>
<dbReference type="EMBL" id="CP001349">
    <property type="protein sequence ID" value="ACL57150.1"/>
    <property type="molecule type" value="Genomic_DNA"/>
</dbReference>
<dbReference type="RefSeq" id="WP_015928836.1">
    <property type="nucleotide sequence ID" value="NC_011894.1"/>
</dbReference>
<dbReference type="SMR" id="B8IUT2"/>
<dbReference type="STRING" id="460265.Mnod_2168"/>
<dbReference type="KEGG" id="mno:Mnod_2168"/>
<dbReference type="eggNOG" id="COG0173">
    <property type="taxonomic scope" value="Bacteria"/>
</dbReference>
<dbReference type="HOGENOM" id="CLU_014330_3_2_5"/>
<dbReference type="OrthoDB" id="9802326at2"/>
<dbReference type="Proteomes" id="UP000008207">
    <property type="component" value="Chromosome"/>
</dbReference>
<dbReference type="GO" id="GO:0005737">
    <property type="term" value="C:cytoplasm"/>
    <property type="evidence" value="ECO:0007669"/>
    <property type="project" value="UniProtKB-SubCell"/>
</dbReference>
<dbReference type="GO" id="GO:0004815">
    <property type="term" value="F:aspartate-tRNA ligase activity"/>
    <property type="evidence" value="ECO:0007669"/>
    <property type="project" value="UniProtKB-UniRule"/>
</dbReference>
<dbReference type="GO" id="GO:0050560">
    <property type="term" value="F:aspartate-tRNA(Asn) ligase activity"/>
    <property type="evidence" value="ECO:0007669"/>
    <property type="project" value="UniProtKB-EC"/>
</dbReference>
<dbReference type="GO" id="GO:0005524">
    <property type="term" value="F:ATP binding"/>
    <property type="evidence" value="ECO:0007669"/>
    <property type="project" value="UniProtKB-UniRule"/>
</dbReference>
<dbReference type="GO" id="GO:0003676">
    <property type="term" value="F:nucleic acid binding"/>
    <property type="evidence" value="ECO:0007669"/>
    <property type="project" value="InterPro"/>
</dbReference>
<dbReference type="GO" id="GO:0006422">
    <property type="term" value="P:aspartyl-tRNA aminoacylation"/>
    <property type="evidence" value="ECO:0007669"/>
    <property type="project" value="UniProtKB-UniRule"/>
</dbReference>
<dbReference type="CDD" id="cd00777">
    <property type="entry name" value="AspRS_core"/>
    <property type="match status" value="1"/>
</dbReference>
<dbReference type="CDD" id="cd04317">
    <property type="entry name" value="EcAspRS_like_N"/>
    <property type="match status" value="1"/>
</dbReference>
<dbReference type="Gene3D" id="3.30.930.10">
    <property type="entry name" value="Bira Bifunctional Protein, Domain 2"/>
    <property type="match status" value="1"/>
</dbReference>
<dbReference type="Gene3D" id="3.30.1360.30">
    <property type="entry name" value="GAD-like domain"/>
    <property type="match status" value="1"/>
</dbReference>
<dbReference type="Gene3D" id="2.40.50.140">
    <property type="entry name" value="Nucleic acid-binding proteins"/>
    <property type="match status" value="1"/>
</dbReference>
<dbReference type="HAMAP" id="MF_00044">
    <property type="entry name" value="Asp_tRNA_synth_type1"/>
    <property type="match status" value="1"/>
</dbReference>
<dbReference type="InterPro" id="IPR004364">
    <property type="entry name" value="Aa-tRNA-synt_II"/>
</dbReference>
<dbReference type="InterPro" id="IPR006195">
    <property type="entry name" value="aa-tRNA-synth_II"/>
</dbReference>
<dbReference type="InterPro" id="IPR045864">
    <property type="entry name" value="aa-tRNA-synth_II/BPL/LPL"/>
</dbReference>
<dbReference type="InterPro" id="IPR004524">
    <property type="entry name" value="Asp-tRNA-ligase_1"/>
</dbReference>
<dbReference type="InterPro" id="IPR047089">
    <property type="entry name" value="Asp-tRNA-ligase_1_N"/>
</dbReference>
<dbReference type="InterPro" id="IPR002312">
    <property type="entry name" value="Asp/Asn-tRNA-synth_IIb"/>
</dbReference>
<dbReference type="InterPro" id="IPR047090">
    <property type="entry name" value="AspRS_core"/>
</dbReference>
<dbReference type="InterPro" id="IPR004115">
    <property type="entry name" value="GAD-like_sf"/>
</dbReference>
<dbReference type="InterPro" id="IPR029351">
    <property type="entry name" value="GAD_dom"/>
</dbReference>
<dbReference type="InterPro" id="IPR012340">
    <property type="entry name" value="NA-bd_OB-fold"/>
</dbReference>
<dbReference type="InterPro" id="IPR004365">
    <property type="entry name" value="NA-bd_OB_tRNA"/>
</dbReference>
<dbReference type="NCBIfam" id="TIGR00459">
    <property type="entry name" value="aspS_bact"/>
    <property type="match status" value="1"/>
</dbReference>
<dbReference type="NCBIfam" id="NF001750">
    <property type="entry name" value="PRK00476.1"/>
    <property type="match status" value="1"/>
</dbReference>
<dbReference type="PANTHER" id="PTHR22594:SF5">
    <property type="entry name" value="ASPARTATE--TRNA LIGASE, MITOCHONDRIAL"/>
    <property type="match status" value="1"/>
</dbReference>
<dbReference type="PANTHER" id="PTHR22594">
    <property type="entry name" value="ASPARTYL/LYSYL-TRNA SYNTHETASE"/>
    <property type="match status" value="1"/>
</dbReference>
<dbReference type="Pfam" id="PF02938">
    <property type="entry name" value="GAD"/>
    <property type="match status" value="1"/>
</dbReference>
<dbReference type="Pfam" id="PF00152">
    <property type="entry name" value="tRNA-synt_2"/>
    <property type="match status" value="1"/>
</dbReference>
<dbReference type="Pfam" id="PF01336">
    <property type="entry name" value="tRNA_anti-codon"/>
    <property type="match status" value="1"/>
</dbReference>
<dbReference type="PRINTS" id="PR01042">
    <property type="entry name" value="TRNASYNTHASP"/>
</dbReference>
<dbReference type="SUPFAM" id="SSF55681">
    <property type="entry name" value="Class II aaRS and biotin synthetases"/>
    <property type="match status" value="1"/>
</dbReference>
<dbReference type="SUPFAM" id="SSF55261">
    <property type="entry name" value="GAD domain-like"/>
    <property type="match status" value="1"/>
</dbReference>
<dbReference type="SUPFAM" id="SSF50249">
    <property type="entry name" value="Nucleic acid-binding proteins"/>
    <property type="match status" value="1"/>
</dbReference>
<dbReference type="PROSITE" id="PS50862">
    <property type="entry name" value="AA_TRNA_LIGASE_II"/>
    <property type="match status" value="1"/>
</dbReference>
<organism>
    <name type="scientific">Methylobacterium nodulans (strain LMG 21967 / CNCM I-2342 / ORS 2060)</name>
    <dbReference type="NCBI Taxonomy" id="460265"/>
    <lineage>
        <taxon>Bacteria</taxon>
        <taxon>Pseudomonadati</taxon>
        <taxon>Pseudomonadota</taxon>
        <taxon>Alphaproteobacteria</taxon>
        <taxon>Hyphomicrobiales</taxon>
        <taxon>Methylobacteriaceae</taxon>
        <taxon>Methylobacterium</taxon>
    </lineage>
</organism>
<feature type="chain" id="PRO_1000198999" description="Aspartate--tRNA(Asp/Asn) ligase">
    <location>
        <begin position="1"/>
        <end position="604"/>
    </location>
</feature>
<feature type="region of interest" description="Aspartate" evidence="1">
    <location>
        <begin position="199"/>
        <end position="202"/>
    </location>
</feature>
<feature type="binding site" evidence="1">
    <location>
        <position position="175"/>
    </location>
    <ligand>
        <name>L-aspartate</name>
        <dbReference type="ChEBI" id="CHEBI:29991"/>
    </ligand>
</feature>
<feature type="binding site" evidence="1">
    <location>
        <begin position="221"/>
        <end position="223"/>
    </location>
    <ligand>
        <name>ATP</name>
        <dbReference type="ChEBI" id="CHEBI:30616"/>
    </ligand>
</feature>
<feature type="binding site" evidence="1">
    <location>
        <position position="221"/>
    </location>
    <ligand>
        <name>L-aspartate</name>
        <dbReference type="ChEBI" id="CHEBI:29991"/>
    </ligand>
</feature>
<feature type="binding site" evidence="1">
    <location>
        <position position="456"/>
    </location>
    <ligand>
        <name>L-aspartate</name>
        <dbReference type="ChEBI" id="CHEBI:29991"/>
    </ligand>
</feature>
<feature type="binding site" evidence="1">
    <location>
        <position position="496"/>
    </location>
    <ligand>
        <name>ATP</name>
        <dbReference type="ChEBI" id="CHEBI:30616"/>
    </ligand>
</feature>
<feature type="binding site" evidence="1">
    <location>
        <position position="503"/>
    </location>
    <ligand>
        <name>L-aspartate</name>
        <dbReference type="ChEBI" id="CHEBI:29991"/>
    </ligand>
</feature>
<feature type="binding site" evidence="1">
    <location>
        <begin position="548"/>
        <end position="551"/>
    </location>
    <ligand>
        <name>ATP</name>
        <dbReference type="ChEBI" id="CHEBI:30616"/>
    </ligand>
</feature>
<feature type="site" description="Important for tRNA non-discrimination" evidence="1">
    <location>
        <position position="33"/>
    </location>
</feature>
<feature type="site" description="Important for tRNA non-discrimination" evidence="1">
    <location>
        <position position="83"/>
    </location>
</feature>
<sequence>MHRYRSHTCGALRPSDVGSTVRLSGWCHRVRDHGGVLFIDLRDHYGLTQCVVDADSPAFRAAEAVRSEWVIRIDGRVRQRPAGTENPDLPTGAVEVYIADLEVLGHAVELPMPVFGDLDYPEETRLRYRFLDLRREKLHANIMKRGAIIDSLRRRMREGGFFEFQTPILTASSPEGARDFLVPSRLHPGKFYALPQAPQQFKQLTMIAGFDRYFQIAPCFRDEDARADRSPGEFYQLDIEMSFVTQEDVFQAVEPVLRGVFEEFADGWRVTQSFPRIPYAEAMLKYGVDKPDLRNPLLIVDVTEEFSAEAVTFNAFKNLIRAGGVVRAIPAPGAASQPRSFFDKLNDWARSEGAPGLGYIVFEEEGGQLIGRGPIAKFVPAEVQAAIAGKAGLKAGDAVFFSAGTEAKAAGLAGKARIRIGDDLGLSDKDQFAFCWITDFPMYEWNEDEKRIDFSHNPFSMPNYDHKAFLALDPADADTILGIKAFQYDIVCNGIELSSGAIRNHRPDVMEKAFAIAGYGRDVLEQKFGGMLNALRMGAPPHGGIAPGVDRIVMLLCHEPNIREVVLFPMNQRAEDLMMGAPSEVTAKQLRELHIRLNLPEKSA</sequence>
<evidence type="ECO:0000255" key="1">
    <source>
        <dbReference type="HAMAP-Rule" id="MF_00044"/>
    </source>
</evidence>